<dbReference type="EMBL" id="Y10117">
    <property type="protein sequence ID" value="CAA71203.1"/>
    <property type="molecule type" value="mRNA"/>
</dbReference>
<dbReference type="PIR" id="T03951">
    <property type="entry name" value="T03951"/>
</dbReference>
<dbReference type="RefSeq" id="NP_001105729.1">
    <property type="nucleotide sequence ID" value="NM_001112259.1"/>
</dbReference>
<dbReference type="SMR" id="O04438"/>
<dbReference type="STRING" id="4577.O04438"/>
<dbReference type="PaxDb" id="4577-GRMZM2G046576_P01"/>
<dbReference type="eggNOG" id="KOG3465">
    <property type="taxonomic scope" value="Eukaryota"/>
</dbReference>
<dbReference type="InParanoid" id="O04438"/>
<dbReference type="Proteomes" id="UP000007305">
    <property type="component" value="Unplaced"/>
</dbReference>
<dbReference type="ExpressionAtlas" id="O04438">
    <property type="expression patterns" value="baseline and differential"/>
</dbReference>
<dbReference type="GO" id="GO:0005786">
    <property type="term" value="C:signal recognition particle, endoplasmic reticulum targeting"/>
    <property type="evidence" value="ECO:0000318"/>
    <property type="project" value="GO_Central"/>
</dbReference>
<dbReference type="GO" id="GO:0008312">
    <property type="term" value="F:7S RNA binding"/>
    <property type="evidence" value="ECO:0007669"/>
    <property type="project" value="InterPro"/>
</dbReference>
<dbReference type="GO" id="GO:0045900">
    <property type="term" value="P:negative regulation of translational elongation"/>
    <property type="evidence" value="ECO:0007669"/>
    <property type="project" value="InterPro"/>
</dbReference>
<dbReference type="GO" id="GO:0006614">
    <property type="term" value="P:SRP-dependent cotranslational protein targeting to membrane"/>
    <property type="evidence" value="ECO:0000318"/>
    <property type="project" value="GO_Central"/>
</dbReference>
<dbReference type="FunFam" id="3.30.720.10:FF:000001">
    <property type="entry name" value="Signal recognition particle 9 kDa protein"/>
    <property type="match status" value="1"/>
</dbReference>
<dbReference type="Gene3D" id="3.30.720.10">
    <property type="entry name" value="Signal recognition particle alu RNA binding heterodimer, srp9/1"/>
    <property type="match status" value="1"/>
</dbReference>
<dbReference type="InterPro" id="IPR009018">
    <property type="entry name" value="Signal_recog_particle_SRP9/14"/>
</dbReference>
<dbReference type="InterPro" id="IPR008832">
    <property type="entry name" value="SRP9"/>
</dbReference>
<dbReference type="InterPro" id="IPR039914">
    <property type="entry name" value="SRP9-like"/>
</dbReference>
<dbReference type="InterPro" id="IPR039432">
    <property type="entry name" value="SRP9_dom"/>
</dbReference>
<dbReference type="PANTHER" id="PTHR12834">
    <property type="entry name" value="SIGNAL RECOGNITION PARTICLE 9 KDA PROTEIN"/>
    <property type="match status" value="1"/>
</dbReference>
<dbReference type="PANTHER" id="PTHR12834:SF12">
    <property type="entry name" value="SIGNAL RECOGNITION PARTICLE 9 KDA PROTEIN"/>
    <property type="match status" value="1"/>
</dbReference>
<dbReference type="Pfam" id="PF05486">
    <property type="entry name" value="SRP9-21"/>
    <property type="match status" value="1"/>
</dbReference>
<dbReference type="PIRSF" id="PIRSF017029">
    <property type="entry name" value="Signal_recog_particle_SRP9"/>
    <property type="match status" value="1"/>
</dbReference>
<dbReference type="SUPFAM" id="SSF54762">
    <property type="entry name" value="Signal recognition particle alu RNA binding heterodimer, SRP9/14"/>
    <property type="match status" value="1"/>
</dbReference>
<feature type="chain" id="PRO_0000135187" description="Signal recognition particle 9 kDa protein">
    <location>
        <begin position="1"/>
        <end position="103"/>
    </location>
</feature>
<feature type="region of interest" description="Disordered" evidence="4">
    <location>
        <begin position="81"/>
        <end position="103"/>
    </location>
</feature>
<sequence length="103" mass="12077">MVYVDSWEEFVERSVQLFRGDPNATRYVMKYRHCEGKLVLKVTDDRECLKFKTDQAQDAKKMEKLNNIFFALMTRGPDVDISEVSGKEQAEQQQAKKGRGRRQ</sequence>
<accession>O04438</accession>
<comment type="function">
    <text evidence="2">Component of the signal recognition particle (SRP) complex, a ribonucleoprotein complex that mediates the cotranslational targeting of secretory and membrane proteins to the endoplasmic reticulum (ER) (By similarity). SRP9 together with SRP14 and the Alu portion of the SRP RNA, constitutes the elongation arrest domain of SRP (By similarity). The complex of SRP9 and SRP14 is required for SRP RNA binding (By similarity).</text>
</comment>
<comment type="subunit">
    <text evidence="2 3">Heterodimer with SRP14; binds RNA as heterodimer (By similarity). Component of a signal recognition particle complex that consists of a 7SL RNA molecule and six protein subunits: SRP72, SRP68, SRP54, SRP19, SRP14 and SRP9 (By similarity).</text>
</comment>
<comment type="subcellular location">
    <subcellularLocation>
        <location evidence="1">Cytoplasm</location>
    </subcellularLocation>
</comment>
<comment type="similarity">
    <text evidence="5">Belongs to the SRP9 family.</text>
</comment>
<organism>
    <name type="scientific">Zea mays</name>
    <name type="common">Maize</name>
    <dbReference type="NCBI Taxonomy" id="4577"/>
    <lineage>
        <taxon>Eukaryota</taxon>
        <taxon>Viridiplantae</taxon>
        <taxon>Streptophyta</taxon>
        <taxon>Embryophyta</taxon>
        <taxon>Tracheophyta</taxon>
        <taxon>Spermatophyta</taxon>
        <taxon>Magnoliopsida</taxon>
        <taxon>Liliopsida</taxon>
        <taxon>Poales</taxon>
        <taxon>Poaceae</taxon>
        <taxon>PACMAD clade</taxon>
        <taxon>Panicoideae</taxon>
        <taxon>Andropogonodae</taxon>
        <taxon>Andropogoneae</taxon>
        <taxon>Tripsacinae</taxon>
        <taxon>Zea</taxon>
    </lineage>
</organism>
<protein>
    <recommendedName>
        <fullName>Signal recognition particle 9 kDa protein</fullName>
        <shortName>SRP9</shortName>
    </recommendedName>
</protein>
<evidence type="ECO:0000250" key="1"/>
<evidence type="ECO:0000250" key="2">
    <source>
        <dbReference type="UniProtKB" id="P21262"/>
    </source>
</evidence>
<evidence type="ECO:0000250" key="3">
    <source>
        <dbReference type="UniProtKB" id="P49458"/>
    </source>
</evidence>
<evidence type="ECO:0000256" key="4">
    <source>
        <dbReference type="SAM" id="MobiDB-lite"/>
    </source>
</evidence>
<evidence type="ECO:0000305" key="5"/>
<name>SRP09_MAIZE</name>
<reference key="1">
    <citation type="submission" date="1996-12" db="EMBL/GenBank/DDBJ databases">
        <authorList>
            <person name="Bui N."/>
            <person name="Wolff N."/>
            <person name="Strub K."/>
        </authorList>
    </citation>
    <scope>NUCLEOTIDE SEQUENCE [MRNA]</scope>
    <source>
        <strain>cv. Wisconsin 64A2</strain>
    </source>
</reference>
<proteinExistence type="inferred from homology"/>
<keyword id="KW-0963">Cytoplasm</keyword>
<keyword id="KW-1185">Reference proteome</keyword>
<keyword id="KW-0687">Ribonucleoprotein</keyword>
<keyword id="KW-0694">RNA-binding</keyword>
<keyword id="KW-0733">Signal recognition particle</keyword>
<gene>
    <name type="primary">SRP9</name>
</gene>